<gene>
    <name evidence="1" type="primary">dbh</name>
    <name type="ordered locus">OE_2475F</name>
</gene>
<evidence type="ECO:0000255" key="1">
    <source>
        <dbReference type="HAMAP-Rule" id="MF_01113"/>
    </source>
</evidence>
<evidence type="ECO:0000256" key="2">
    <source>
        <dbReference type="SAM" id="MobiDB-lite"/>
    </source>
</evidence>
<dbReference type="EC" id="2.7.7.7" evidence="1"/>
<dbReference type="EMBL" id="AM774415">
    <property type="protein sequence ID" value="CAP13705.1"/>
    <property type="molecule type" value="Genomic_DNA"/>
</dbReference>
<dbReference type="SMR" id="B0R4P0"/>
<dbReference type="EnsemblBacteria" id="CAP13705">
    <property type="protein sequence ID" value="CAP13705"/>
    <property type="gene ID" value="OE_2475F"/>
</dbReference>
<dbReference type="GeneID" id="5953908"/>
<dbReference type="KEGG" id="hsl:OE_2475F"/>
<dbReference type="HOGENOM" id="CLU_012348_1_2_2"/>
<dbReference type="PhylomeDB" id="B0R4P0"/>
<dbReference type="Proteomes" id="UP000001321">
    <property type="component" value="Chromosome"/>
</dbReference>
<dbReference type="GO" id="GO:0005737">
    <property type="term" value="C:cytoplasm"/>
    <property type="evidence" value="ECO:0007669"/>
    <property type="project" value="UniProtKB-SubCell"/>
</dbReference>
<dbReference type="GO" id="GO:0003684">
    <property type="term" value="F:damaged DNA binding"/>
    <property type="evidence" value="ECO:0007669"/>
    <property type="project" value="InterPro"/>
</dbReference>
<dbReference type="GO" id="GO:0003887">
    <property type="term" value="F:DNA-directed DNA polymerase activity"/>
    <property type="evidence" value="ECO:0007669"/>
    <property type="project" value="UniProtKB-UniRule"/>
</dbReference>
<dbReference type="GO" id="GO:0000287">
    <property type="term" value="F:magnesium ion binding"/>
    <property type="evidence" value="ECO:0007669"/>
    <property type="project" value="UniProtKB-UniRule"/>
</dbReference>
<dbReference type="GO" id="GO:0006261">
    <property type="term" value="P:DNA-templated DNA replication"/>
    <property type="evidence" value="ECO:0007669"/>
    <property type="project" value="UniProtKB-UniRule"/>
</dbReference>
<dbReference type="GO" id="GO:0042276">
    <property type="term" value="P:error-prone translesion synthesis"/>
    <property type="evidence" value="ECO:0007669"/>
    <property type="project" value="TreeGrafter"/>
</dbReference>
<dbReference type="CDD" id="cd03586">
    <property type="entry name" value="PolY_Pol_IV_kappa"/>
    <property type="match status" value="1"/>
</dbReference>
<dbReference type="Gene3D" id="3.30.70.270">
    <property type="match status" value="1"/>
</dbReference>
<dbReference type="Gene3D" id="3.40.1170.60">
    <property type="match status" value="1"/>
</dbReference>
<dbReference type="Gene3D" id="1.10.150.20">
    <property type="entry name" value="5' to 3' exonuclease, C-terminal subdomain"/>
    <property type="match status" value="1"/>
</dbReference>
<dbReference type="Gene3D" id="3.30.1490.100">
    <property type="entry name" value="DNA polymerase, Y-family, little finger domain"/>
    <property type="match status" value="1"/>
</dbReference>
<dbReference type="HAMAP" id="MF_01113">
    <property type="entry name" value="DNApol_IV"/>
    <property type="match status" value="1"/>
</dbReference>
<dbReference type="InterPro" id="IPR043502">
    <property type="entry name" value="DNA/RNA_pol_sf"/>
</dbReference>
<dbReference type="InterPro" id="IPR036775">
    <property type="entry name" value="DNA_pol_Y-fam_lit_finger_sf"/>
</dbReference>
<dbReference type="InterPro" id="IPR017961">
    <property type="entry name" value="DNA_pol_Y-fam_little_finger"/>
</dbReference>
<dbReference type="InterPro" id="IPR050116">
    <property type="entry name" value="DNA_polymerase-Y"/>
</dbReference>
<dbReference type="InterPro" id="IPR022880">
    <property type="entry name" value="DNApol_IV"/>
</dbReference>
<dbReference type="InterPro" id="IPR024728">
    <property type="entry name" value="PolY_HhH_motif"/>
</dbReference>
<dbReference type="InterPro" id="IPR043128">
    <property type="entry name" value="Rev_trsase/Diguanyl_cyclase"/>
</dbReference>
<dbReference type="InterPro" id="IPR001126">
    <property type="entry name" value="UmuC"/>
</dbReference>
<dbReference type="NCBIfam" id="NF002677">
    <property type="entry name" value="PRK02406.1"/>
    <property type="match status" value="1"/>
</dbReference>
<dbReference type="PANTHER" id="PTHR11076:SF33">
    <property type="entry name" value="DNA POLYMERASE KAPPA"/>
    <property type="match status" value="1"/>
</dbReference>
<dbReference type="PANTHER" id="PTHR11076">
    <property type="entry name" value="DNA REPAIR POLYMERASE UMUC / TRANSFERASE FAMILY MEMBER"/>
    <property type="match status" value="1"/>
</dbReference>
<dbReference type="Pfam" id="PF00817">
    <property type="entry name" value="IMS"/>
    <property type="match status" value="1"/>
</dbReference>
<dbReference type="Pfam" id="PF11799">
    <property type="entry name" value="IMS_C"/>
    <property type="match status" value="1"/>
</dbReference>
<dbReference type="Pfam" id="PF11798">
    <property type="entry name" value="IMS_HHH"/>
    <property type="match status" value="1"/>
</dbReference>
<dbReference type="SUPFAM" id="SSF56672">
    <property type="entry name" value="DNA/RNA polymerases"/>
    <property type="match status" value="1"/>
</dbReference>
<dbReference type="SUPFAM" id="SSF100879">
    <property type="entry name" value="Lesion bypass DNA polymerase (Y-family), little finger domain"/>
    <property type="match status" value="1"/>
</dbReference>
<dbReference type="PROSITE" id="PS50173">
    <property type="entry name" value="UMUC"/>
    <property type="match status" value="1"/>
</dbReference>
<feature type="chain" id="PRO_1000137136" description="DNA polymerase IV">
    <location>
        <begin position="1"/>
        <end position="411"/>
    </location>
</feature>
<feature type="domain" description="UmuC" evidence="1">
    <location>
        <begin position="18"/>
        <end position="211"/>
    </location>
</feature>
<feature type="region of interest" description="Disordered" evidence="2">
    <location>
        <begin position="248"/>
        <end position="280"/>
    </location>
</feature>
<feature type="region of interest" description="Disordered" evidence="2">
    <location>
        <begin position="376"/>
        <end position="411"/>
    </location>
</feature>
<feature type="compositionally biased region" description="Basic and acidic residues" evidence="2">
    <location>
        <begin position="253"/>
        <end position="274"/>
    </location>
</feature>
<feature type="compositionally biased region" description="Gly residues" evidence="2">
    <location>
        <begin position="384"/>
        <end position="402"/>
    </location>
</feature>
<feature type="active site" evidence="1">
    <location>
        <position position="131"/>
    </location>
</feature>
<feature type="binding site" evidence="1">
    <location>
        <position position="22"/>
    </location>
    <ligand>
        <name>Mg(2+)</name>
        <dbReference type="ChEBI" id="CHEBI:18420"/>
    </ligand>
</feature>
<feature type="binding site" evidence="1">
    <location>
        <position position="130"/>
    </location>
    <ligand>
        <name>Mg(2+)</name>
        <dbReference type="ChEBI" id="CHEBI:18420"/>
    </ligand>
</feature>
<feature type="site" description="Substrate discrimination" evidence="1">
    <location>
        <position position="27"/>
    </location>
</feature>
<proteinExistence type="inferred from homology"/>
<keyword id="KW-0963">Cytoplasm</keyword>
<keyword id="KW-0227">DNA damage</keyword>
<keyword id="KW-0234">DNA repair</keyword>
<keyword id="KW-0235">DNA replication</keyword>
<keyword id="KW-0238">DNA-binding</keyword>
<keyword id="KW-0239">DNA-directed DNA polymerase</keyword>
<keyword id="KW-0460">Magnesium</keyword>
<keyword id="KW-0479">Metal-binding</keyword>
<keyword id="KW-0515">Mutator protein</keyword>
<keyword id="KW-0548">Nucleotidyltransferase</keyword>
<keyword id="KW-0808">Transferase</keyword>
<comment type="function">
    <text evidence="1">Poorly processive, error-prone DNA polymerase involved in untargeted mutagenesis. Copies undamaged DNA at stalled replication forks, which arise in vivo from mismatched or misaligned primer ends. These misaligned primers can be extended by PolIV. Exhibits no 3'-5' exonuclease (proofreading) activity. May be involved in translesional synthesis.</text>
</comment>
<comment type="catalytic activity">
    <reaction evidence="1">
        <text>DNA(n) + a 2'-deoxyribonucleoside 5'-triphosphate = DNA(n+1) + diphosphate</text>
        <dbReference type="Rhea" id="RHEA:22508"/>
        <dbReference type="Rhea" id="RHEA-COMP:17339"/>
        <dbReference type="Rhea" id="RHEA-COMP:17340"/>
        <dbReference type="ChEBI" id="CHEBI:33019"/>
        <dbReference type="ChEBI" id="CHEBI:61560"/>
        <dbReference type="ChEBI" id="CHEBI:173112"/>
        <dbReference type="EC" id="2.7.7.7"/>
    </reaction>
</comment>
<comment type="cofactor">
    <cofactor evidence="1">
        <name>Mg(2+)</name>
        <dbReference type="ChEBI" id="CHEBI:18420"/>
    </cofactor>
    <text evidence="1">Binds 2 magnesium ions per subunit.</text>
</comment>
<comment type="subunit">
    <text evidence="1">Monomer.</text>
</comment>
<comment type="subcellular location">
    <subcellularLocation>
        <location evidence="1">Cytoplasm</location>
    </subcellularLocation>
</comment>
<comment type="similarity">
    <text evidence="1">Belongs to the DNA polymerase type-Y family.</text>
</comment>
<name>DPO4_HALS3</name>
<accession>B0R4P0</accession>
<reference key="1">
    <citation type="journal article" date="2008" name="Genomics">
        <title>Evolution in the laboratory: the genome of Halobacterium salinarum strain R1 compared to that of strain NRC-1.</title>
        <authorList>
            <person name="Pfeiffer F."/>
            <person name="Schuster S.C."/>
            <person name="Broicher A."/>
            <person name="Falb M."/>
            <person name="Palm P."/>
            <person name="Rodewald K."/>
            <person name="Ruepp A."/>
            <person name="Soppa J."/>
            <person name="Tittor J."/>
            <person name="Oesterhelt D."/>
        </authorList>
    </citation>
    <scope>NUCLEOTIDE SEQUENCE [LARGE SCALE GENOMIC DNA]</scope>
    <source>
        <strain>ATCC 29341 / DSM 671 / R1</strain>
    </source>
</reference>
<organism>
    <name type="scientific">Halobacterium salinarum (strain ATCC 29341 / DSM 671 / R1)</name>
    <dbReference type="NCBI Taxonomy" id="478009"/>
    <lineage>
        <taxon>Archaea</taxon>
        <taxon>Methanobacteriati</taxon>
        <taxon>Methanobacteriota</taxon>
        <taxon>Stenosarchaea group</taxon>
        <taxon>Halobacteria</taxon>
        <taxon>Halobacteriales</taxon>
        <taxon>Halobacteriaceae</taxon>
        <taxon>Halobacterium</taxon>
        <taxon>Halobacterium salinarum NRC-34001</taxon>
    </lineage>
</organism>
<sequence length="411" mass="43492">MPAGERLPGAPAREERIVVHVDMDCFYASCERRREPALRGAPVVVGMGYEPDQTVGAVATASYEAREYGVESAQAISAALERLPRKADAPDASAAGYYRPVDMAYYESVSESVSEILHGLGDPVREVSIDEAYLDVTDRTAWDVAAGFGRHIKQRIARSVGVPASVGIAPDMSTAKLASDHEKPDGLVVVPPESVQSFLAPLDVADLHGVGPVHARALRERGIETVGELADADPYVLEAAFGERGREFHRRARGADSRPVEPRGKPKSLSRESSFDGATESFDRVREQAAALSGAVADRASRTNASYRTIGVKVVTPPYDVQTRAESLPGPVDDPALLEAVSQSLLDEFEGAAVRKVGVRVSNLVFSEREQATLAGFSGDETGDGGGHEGGACGGAGRGSCGGQTTLDEFT</sequence>
<protein>
    <recommendedName>
        <fullName evidence="1">DNA polymerase IV</fullName>
        <shortName evidence="1">Pol IV</shortName>
        <ecNumber evidence="1">2.7.7.7</ecNumber>
    </recommendedName>
</protein>